<evidence type="ECO:0000269" key="1">
    <source>
    </source>
</evidence>
<evidence type="ECO:0000303" key="2">
    <source>
    </source>
</evidence>
<evidence type="ECO:0000305" key="3"/>
<keyword id="KW-0929">Antimicrobial</keyword>
<keyword id="KW-0903">Direct protein sequencing</keyword>
<keyword id="KW-0295">Fungicide</keyword>
<keyword id="KW-1185">Reference proteome</keyword>
<keyword id="KW-0964">Secreted</keyword>
<comment type="function">
    <text evidence="1">Antifungal activity against C.albicans ATCC 76615.</text>
</comment>
<comment type="subcellular location">
    <subcellularLocation>
        <location evidence="1">Secreted</location>
    </subcellularLocation>
</comment>
<comment type="mass spectrometry" mass="17203.385" method="MALDI" evidence="1"/>
<protein>
    <recommendedName>
        <fullName evidence="2">Antifungal protein 1</fullName>
    </recommendedName>
    <alternativeName>
        <fullName evidence="2">MAF-1</fullName>
    </alternativeName>
</protein>
<dbReference type="Proteomes" id="UP000694905">
    <property type="component" value="Unplaced"/>
</dbReference>
<dbReference type="GO" id="GO:0005576">
    <property type="term" value="C:extracellular region"/>
    <property type="evidence" value="ECO:0000314"/>
    <property type="project" value="UniProtKB"/>
</dbReference>
<dbReference type="GO" id="GO:0050832">
    <property type="term" value="P:defense response to fungus"/>
    <property type="evidence" value="ECO:0000314"/>
    <property type="project" value="UniProtKB"/>
</dbReference>
<dbReference type="GO" id="GO:0031640">
    <property type="term" value="P:killing of cells of another organism"/>
    <property type="evidence" value="ECO:0007669"/>
    <property type="project" value="UniProtKB-KW"/>
</dbReference>
<accession>P86696</accession>
<sequence length="31" mass="3249">ESAPAPEVSGDAVFSAIQNGXLKNLGNAFFW</sequence>
<proteinExistence type="evidence at protein level"/>
<name>MAF1_MUSDO</name>
<organism>
    <name type="scientific">Musca domestica</name>
    <name type="common">House fly</name>
    <dbReference type="NCBI Taxonomy" id="7370"/>
    <lineage>
        <taxon>Eukaryota</taxon>
        <taxon>Metazoa</taxon>
        <taxon>Ecdysozoa</taxon>
        <taxon>Arthropoda</taxon>
        <taxon>Hexapoda</taxon>
        <taxon>Insecta</taxon>
        <taxon>Pterygota</taxon>
        <taxon>Neoptera</taxon>
        <taxon>Endopterygota</taxon>
        <taxon>Diptera</taxon>
        <taxon>Brachycera</taxon>
        <taxon>Muscomorpha</taxon>
        <taxon>Muscoidea</taxon>
        <taxon>Muscidae</taxon>
        <taxon>Musca</taxon>
    </lineage>
</organism>
<reference evidence="3" key="1">
    <citation type="journal article" date="2009" name="Cell. Mol. Immunol.">
        <title>Purification and molecular identification of an antifungal peptide from the hemolymph of Musca domestica (housefly).</title>
        <authorList>
            <person name="Fu P."/>
            <person name="Wu J."/>
            <person name="Guo G."/>
        </authorList>
    </citation>
    <scope>PROTEIN SEQUENCE</scope>
    <scope>FUNCTION</scope>
    <scope>SUBCELLULAR LOCATION</scope>
    <scope>MASS SPECTROMETRY</scope>
    <source>
        <tissue evidence="1">Hemolymph</tissue>
    </source>
</reference>
<feature type="chain" id="PRO_0000397941" description="Antifungal protein 1">
    <location>
        <begin position="1"/>
        <end position="31" status="greater than"/>
    </location>
</feature>
<feature type="non-terminal residue" evidence="2">
    <location>
        <position position="31"/>
    </location>
</feature>